<reference key="1">
    <citation type="submission" date="1995-10" db="EMBL/GenBank/DDBJ databases">
        <title>Purification, cloning and sequencing analysis of B-N-acetyl-hexosaminidase from epididymal boar.</title>
        <authorList>
            <person name="Syntin P."/>
            <person name="Okamura N."/>
            <person name="Guillou F."/>
            <person name="Dacheux F."/>
            <person name="Dacheux J.-L."/>
        </authorList>
    </citation>
    <scope>NUCLEOTIDE SEQUENCE [MRNA]</scope>
    <source>
        <tissue>Epididymis</tissue>
    </source>
</reference>
<reference key="2">
    <citation type="journal article" date="1996" name="Biol. Reprod.">
        <title>Characterization and identification of proteins secreted in the various regions of the adult boar epididymis.</title>
        <authorList>
            <person name="Syntin P."/>
            <person name="Dacheux F."/>
            <person name="Druart X."/>
            <person name="Gatti J.L."/>
            <person name="Okamura N."/>
            <person name="Dacheux J.-L."/>
        </authorList>
    </citation>
    <scope>PARTIAL PROTEIN SEQUENCE</scope>
    <source>
        <tissue>Epididymis</tissue>
    </source>
</reference>
<sequence>MEVLPGLLRLLAALVVAERWARDTSGAESLGLWPLPFAVDISPRSLHLSPNNFFFGHSPTSKAGSSCEILQEAFRRYYDFIFGFYKWHQGSYQLCFGTELQQLQVHVESECDTFPSISSNESYVLHVKGPEALLRANTVWGALRGLETFSQLIYQDSYGTFTVNESEIIDFPRFPHRGILIDTGRHFLSVKTIFKTLDAMAFNKFNVLHWHIVDDQSFPYQSINFGVLSSKGSYSLSHVYTPNDVRMVIEYARIRGIRVMPEFDTPGHSRSWGKGQKDLLTPCYRKQVLSGTFGPINPILNTTYNFLSKFFKEISTVFPDEFIHIGGDEVDFDCWASNSEILQFMQEKGFSQISLNSNLCTVFKISNMISAMKKRPIVWQEAFDGRDKFMPGTVVQVWKIEDYKWEQSLITKAGFPVILSAPWYLDLISYGQDWKNYYEVEPQDFPGSDKERKRVLGGEACLWGEYVDATNLTPRLWPRASAVGERLWSHKDVRDIHDAYSRLTIHRCRMVRRGIAAEPLFTGYCNHEHRM</sequence>
<evidence type="ECO:0000250" key="1"/>
<evidence type="ECO:0000250" key="2">
    <source>
        <dbReference type="UniProtKB" id="P06865"/>
    </source>
</evidence>
<evidence type="ECO:0000250" key="3">
    <source>
        <dbReference type="UniProtKB" id="P07686"/>
    </source>
</evidence>
<evidence type="ECO:0000250" key="4">
    <source>
        <dbReference type="UniProtKB" id="P20060"/>
    </source>
</evidence>
<evidence type="ECO:0000255" key="5"/>
<evidence type="ECO:0000305" key="6"/>
<proteinExistence type="evidence at protein level"/>
<feature type="signal peptide" evidence="5">
    <location>
        <begin position="1"/>
        <end position="21"/>
    </location>
</feature>
<feature type="chain" id="PRO_0000012007" description="Beta-hexosaminidase subunit beta">
    <location>
        <begin position="22"/>
        <end position="531"/>
    </location>
</feature>
<feature type="active site" description="Proton donor" evidence="1">
    <location>
        <position position="329"/>
    </location>
</feature>
<feature type="glycosylation site" description="N-linked (GlcNAc...) asparagine" evidence="5">
    <location>
        <position position="120"/>
    </location>
</feature>
<feature type="glycosylation site" description="N-linked (GlcNAc...) asparagine" evidence="5">
    <location>
        <position position="164"/>
    </location>
</feature>
<feature type="glycosylation site" description="N-linked (GlcNAc...) asparagine" evidence="5">
    <location>
        <position position="301"/>
    </location>
</feature>
<feature type="disulfide bond" evidence="1">
    <location>
        <begin position="67"/>
        <end position="111"/>
    </location>
</feature>
<feature type="disulfide bond" evidence="1">
    <location>
        <begin position="283"/>
        <end position="334"/>
    </location>
</feature>
<feature type="disulfide bond" evidence="1">
    <location>
        <begin position="508"/>
        <end position="525"/>
    </location>
</feature>
<protein>
    <recommendedName>
        <fullName evidence="3">Beta-hexosaminidase subunit beta</fullName>
        <ecNumber evidence="3">3.2.1.52</ecNumber>
    </recommendedName>
    <alternativeName>
        <fullName>65 kDa epididymal boar protein</fullName>
    </alternativeName>
    <alternativeName>
        <fullName>Beta-N-acetylhexosaminidase subunit beta</fullName>
        <shortName>Hexosaminidase subunit B</shortName>
    </alternativeName>
    <alternativeName>
        <fullName>N-acetyl-beta-glucosaminidase subunit beta</fullName>
    </alternativeName>
</protein>
<gene>
    <name evidence="3" type="primary">HEXB</name>
</gene>
<name>HEXB_PIG</name>
<accession>Q29548</accession>
<dbReference type="EC" id="3.2.1.52" evidence="3"/>
<dbReference type="EMBL" id="X92379">
    <property type="protein sequence ID" value="CAA63123.1"/>
    <property type="status" value="ALT_FRAME"/>
    <property type="molecule type" value="mRNA"/>
</dbReference>
<dbReference type="RefSeq" id="NP_999086.1">
    <property type="nucleotide sequence ID" value="NM_213921.1"/>
</dbReference>
<dbReference type="SMR" id="Q29548"/>
<dbReference type="FunCoup" id="Q29548">
    <property type="interactions" value="750"/>
</dbReference>
<dbReference type="STRING" id="9823.ENSSSCP00000014965"/>
<dbReference type="CAZy" id="GH20">
    <property type="family name" value="Glycoside Hydrolase Family 20"/>
</dbReference>
<dbReference type="GlyCosmos" id="Q29548">
    <property type="glycosylation" value="3 sites, No reported glycans"/>
</dbReference>
<dbReference type="GlyGen" id="Q29548">
    <property type="glycosylation" value="3 sites"/>
</dbReference>
<dbReference type="PaxDb" id="9823-ENSSSCP00000014965"/>
<dbReference type="PeptideAtlas" id="Q29548"/>
<dbReference type="GeneID" id="396958"/>
<dbReference type="KEGG" id="ssc:396958"/>
<dbReference type="CTD" id="3074"/>
<dbReference type="eggNOG" id="KOG2499">
    <property type="taxonomic scope" value="Eukaryota"/>
</dbReference>
<dbReference type="InParanoid" id="Q29548"/>
<dbReference type="OrthoDB" id="428480at2759"/>
<dbReference type="Proteomes" id="UP000008227">
    <property type="component" value="Unplaced"/>
</dbReference>
<dbReference type="Proteomes" id="UP000314985">
    <property type="component" value="Unplaced"/>
</dbReference>
<dbReference type="Proteomes" id="UP000694570">
    <property type="component" value="Unplaced"/>
</dbReference>
<dbReference type="Proteomes" id="UP000694571">
    <property type="component" value="Unplaced"/>
</dbReference>
<dbReference type="Proteomes" id="UP000694720">
    <property type="component" value="Unplaced"/>
</dbReference>
<dbReference type="Proteomes" id="UP000694722">
    <property type="component" value="Unplaced"/>
</dbReference>
<dbReference type="Proteomes" id="UP000694723">
    <property type="component" value="Unplaced"/>
</dbReference>
<dbReference type="Proteomes" id="UP000694724">
    <property type="component" value="Unplaced"/>
</dbReference>
<dbReference type="Proteomes" id="UP000694725">
    <property type="component" value="Unplaced"/>
</dbReference>
<dbReference type="Proteomes" id="UP000694726">
    <property type="component" value="Unplaced"/>
</dbReference>
<dbReference type="Proteomes" id="UP000694727">
    <property type="component" value="Unplaced"/>
</dbReference>
<dbReference type="Proteomes" id="UP000694728">
    <property type="component" value="Unplaced"/>
</dbReference>
<dbReference type="GO" id="GO:0060473">
    <property type="term" value="C:cortical granule"/>
    <property type="evidence" value="ECO:0000250"/>
    <property type="project" value="UniProtKB"/>
</dbReference>
<dbReference type="GO" id="GO:0005764">
    <property type="term" value="C:lysosome"/>
    <property type="evidence" value="ECO:0000318"/>
    <property type="project" value="GO_Central"/>
</dbReference>
<dbReference type="GO" id="GO:0016020">
    <property type="term" value="C:membrane"/>
    <property type="evidence" value="ECO:0000318"/>
    <property type="project" value="GO_Central"/>
</dbReference>
<dbReference type="GO" id="GO:0004563">
    <property type="term" value="F:beta-N-acetylhexosaminidase activity"/>
    <property type="evidence" value="ECO:0000250"/>
    <property type="project" value="UniProtKB"/>
</dbReference>
<dbReference type="GO" id="GO:0005975">
    <property type="term" value="P:carbohydrate metabolic process"/>
    <property type="evidence" value="ECO:0007669"/>
    <property type="project" value="InterPro"/>
</dbReference>
<dbReference type="GO" id="GO:0006689">
    <property type="term" value="P:ganglioside catabolic process"/>
    <property type="evidence" value="ECO:0000250"/>
    <property type="project" value="UniProtKB"/>
</dbReference>
<dbReference type="GO" id="GO:0030203">
    <property type="term" value="P:glycosaminoglycan metabolic process"/>
    <property type="evidence" value="ECO:0000318"/>
    <property type="project" value="GO_Central"/>
</dbReference>
<dbReference type="GO" id="GO:0006491">
    <property type="term" value="P:N-glycan processing"/>
    <property type="evidence" value="ECO:0000318"/>
    <property type="project" value="GO_Central"/>
</dbReference>
<dbReference type="GO" id="GO:0007338">
    <property type="term" value="P:single fertilization"/>
    <property type="evidence" value="ECO:0000250"/>
    <property type="project" value="UniProtKB"/>
</dbReference>
<dbReference type="CDD" id="cd06562">
    <property type="entry name" value="GH20_HexA_HexB-like"/>
    <property type="match status" value="1"/>
</dbReference>
<dbReference type="FunFam" id="3.20.20.80:FF:000063">
    <property type="entry name" value="Beta-hexosaminidase"/>
    <property type="match status" value="1"/>
</dbReference>
<dbReference type="Gene3D" id="3.30.379.10">
    <property type="entry name" value="Chitobiase/beta-hexosaminidase domain 2-like"/>
    <property type="match status" value="1"/>
</dbReference>
<dbReference type="Gene3D" id="3.20.20.80">
    <property type="entry name" value="Glycosidases"/>
    <property type="match status" value="1"/>
</dbReference>
<dbReference type="InterPro" id="IPR025705">
    <property type="entry name" value="Beta_hexosaminidase_sua/sub"/>
</dbReference>
<dbReference type="InterPro" id="IPR015883">
    <property type="entry name" value="Glyco_hydro_20_cat"/>
</dbReference>
<dbReference type="InterPro" id="IPR017853">
    <property type="entry name" value="Glycoside_hydrolase_SF"/>
</dbReference>
<dbReference type="InterPro" id="IPR029018">
    <property type="entry name" value="Hex-like_dom2"/>
</dbReference>
<dbReference type="InterPro" id="IPR029019">
    <property type="entry name" value="HEX_eukaryotic_N"/>
</dbReference>
<dbReference type="PANTHER" id="PTHR22600">
    <property type="entry name" value="BETA-HEXOSAMINIDASE"/>
    <property type="match status" value="1"/>
</dbReference>
<dbReference type="PANTHER" id="PTHR22600:SF38">
    <property type="entry name" value="BETA-HEXOSAMINIDASE SUBUNIT BETA"/>
    <property type="match status" value="1"/>
</dbReference>
<dbReference type="Pfam" id="PF00728">
    <property type="entry name" value="Glyco_hydro_20"/>
    <property type="match status" value="1"/>
</dbReference>
<dbReference type="Pfam" id="PF14845">
    <property type="entry name" value="Glycohydro_20b2"/>
    <property type="match status" value="1"/>
</dbReference>
<dbReference type="PIRSF" id="PIRSF001093">
    <property type="entry name" value="B-hxosamndse_ab_euk"/>
    <property type="match status" value="1"/>
</dbReference>
<dbReference type="PRINTS" id="PR00738">
    <property type="entry name" value="GLHYDRLASE20"/>
</dbReference>
<dbReference type="SUPFAM" id="SSF51445">
    <property type="entry name" value="(Trans)glycosidases"/>
    <property type="match status" value="1"/>
</dbReference>
<dbReference type="SUPFAM" id="SSF55545">
    <property type="entry name" value="beta-N-acetylhexosaminidase-like domain"/>
    <property type="match status" value="1"/>
</dbReference>
<organism>
    <name type="scientific">Sus scrofa</name>
    <name type="common">Pig</name>
    <dbReference type="NCBI Taxonomy" id="9823"/>
    <lineage>
        <taxon>Eukaryota</taxon>
        <taxon>Metazoa</taxon>
        <taxon>Chordata</taxon>
        <taxon>Craniata</taxon>
        <taxon>Vertebrata</taxon>
        <taxon>Euteleostomi</taxon>
        <taxon>Mammalia</taxon>
        <taxon>Eutheria</taxon>
        <taxon>Laurasiatheria</taxon>
        <taxon>Artiodactyla</taxon>
        <taxon>Suina</taxon>
        <taxon>Suidae</taxon>
        <taxon>Sus</taxon>
    </lineage>
</organism>
<comment type="function">
    <text evidence="3 4">Hydrolyzes the non-reducing end N-acetyl-D-hexosamine and/or sulfated N-acetyl-D-hexosamine of glycoconjugates, such as the oligosaccharide moieties from proteins and neutral glycolipids, or from certain mucopolysaccharides. The isozyme B does not hydrolyze each of these substrates, however hydrolyzes efficiently neutral oligosaccharide. Only the isozyme A is responsible for the degradation of GM2 gangliosides in the presence of GM2A (By similarity). During fertilization is responsible, at least in part, for the zona block to polyspermy. Present in the cortical granules of non-activated oocytes, is exocytosed during the cortical reaction in response to oocyte activation and inactivates the sperm galactosyltransferase-binding site, accounting for the block in sperm binding to the zona pellucida (By similarity).</text>
</comment>
<comment type="catalytic activity">
    <reaction evidence="3">
        <text>Hydrolysis of terminal non-reducing N-acetyl-D-hexosamine residues in N-acetyl-beta-D-hexosaminides.</text>
        <dbReference type="EC" id="3.2.1.52"/>
    </reaction>
</comment>
<comment type="catalytic activity">
    <reaction evidence="3">
        <text>N-acetyl-beta-D-galactosaminyl-(1-&gt;4)-beta-D-3-sulfogalactosyl-(1-&gt;4)-beta-D-glucosyl-(1&lt;-&gt;1')-ceramide + H2O = a beta-D-3-sulfogalactosyl-(1-&gt;4)-beta-D-glucosyl-(1&lt;-&gt;1')-ceramide + N-acetyl-beta-D-galactosamine</text>
        <dbReference type="Rhea" id="RHEA:48276"/>
        <dbReference type="ChEBI" id="CHEBI:15377"/>
        <dbReference type="ChEBI" id="CHEBI:28497"/>
        <dbReference type="ChEBI" id="CHEBI:90163"/>
        <dbReference type="ChEBI" id="CHEBI:90164"/>
    </reaction>
    <physiologicalReaction direction="left-to-right" evidence="3">
        <dbReference type="Rhea" id="RHEA:48277"/>
    </physiologicalReaction>
</comment>
<comment type="catalytic activity">
    <reaction evidence="3">
        <text>a ganglioside GM2 (d18:1(4E)) + H2O = a ganglioside GM3 (d18:1(4E)) + N-acetyl-beta-D-galactosamine</text>
        <dbReference type="Rhea" id="RHEA:47940"/>
        <dbReference type="ChEBI" id="CHEBI:15377"/>
        <dbReference type="ChEBI" id="CHEBI:28497"/>
        <dbReference type="ChEBI" id="CHEBI:60065"/>
        <dbReference type="ChEBI" id="CHEBI:71502"/>
    </reaction>
    <physiologicalReaction direction="left-to-right" evidence="3">
        <dbReference type="Rhea" id="RHEA:47941"/>
    </physiologicalReaction>
</comment>
<comment type="catalytic activity">
    <reaction evidence="3">
        <text>a ganglioside GM2 + H2O = a ganglioside GM3 + N-acetyl-beta-D-galactosamine</text>
        <dbReference type="Rhea" id="RHEA:47968"/>
        <dbReference type="ChEBI" id="CHEBI:15377"/>
        <dbReference type="ChEBI" id="CHEBI:28497"/>
        <dbReference type="ChEBI" id="CHEBI:79210"/>
        <dbReference type="ChEBI" id="CHEBI:79218"/>
    </reaction>
    <physiologicalReaction direction="left-to-right" evidence="3">
        <dbReference type="Rhea" id="RHEA:47969"/>
    </physiologicalReaction>
</comment>
<comment type="catalytic activity">
    <reaction evidence="3">
        <text>beta-D-GalNAc-(1-&gt;4)-alpha-L-IdoA-(1-&gt;3)-beta-D-GalNAc-4-sulfate-(1-&gt;4)-alpha-L-IdoA-(1-&gt;3)-D-GalNAc-4-sulfate + H2O = alpha-L-IdoA-(1-&gt;3)-beta-D-GalNAc-4-sulfate-(1-&gt;4)-alpha-L-IdoA-(1-&gt;3)-D-GalNAc-4-sulfate + N-acetyl-D-galactosamine</text>
        <dbReference type="Rhea" id="RHEA:64372"/>
        <dbReference type="ChEBI" id="CHEBI:15377"/>
        <dbReference type="ChEBI" id="CHEBI:28037"/>
        <dbReference type="ChEBI" id="CHEBI:152565"/>
        <dbReference type="ChEBI" id="CHEBI:152566"/>
    </reaction>
    <physiologicalReaction direction="left-to-right" evidence="3">
        <dbReference type="Rhea" id="RHEA:64373"/>
    </physiologicalReaction>
</comment>
<comment type="catalytic activity">
    <reaction evidence="3">
        <text>N-acetyl-beta-D-6-sulfogalactosaminyl-(1-&gt;4)-alpha-L-iduronyl-(1-&gt;3)-N-acetyl-D-6-sulfogalactosamine + H2O = alpha-L-iduronyl-(1-&gt;3)-N-acetyl-D-6-sulfogalactosamine + N-acetyl-D-6-sulfogalactosamine</text>
        <dbReference type="Rhea" id="RHEA:64384"/>
        <dbReference type="ChEBI" id="CHEBI:15377"/>
        <dbReference type="ChEBI" id="CHEBI:152567"/>
        <dbReference type="ChEBI" id="CHEBI:152568"/>
        <dbReference type="ChEBI" id="CHEBI:153064"/>
    </reaction>
    <physiologicalReaction direction="left-to-right" evidence="3">
        <dbReference type="Rhea" id="RHEA:64385"/>
    </physiologicalReaction>
</comment>
<comment type="activity regulation">
    <text evidence="3">Addition of GM2A stimulates the hydrolysis of sulfated glycosphingolipid SM2 and the ganglioside GM2.</text>
</comment>
<comment type="subunit">
    <text evidence="2 3">There are 3 forms of beta-hexosaminidase: hexosaminidase A is a heterodimer composed of one subunit alpha and one subunit beta (chain A and B); hexosaminidase B is a homodimer of two beta subunits (two chains A and B); hexosaminidase S is a homodimer of two alpha subunits (By similarity). The composition of the dimer (isozyme A versus isozyme S) has a significant effect on the substrate specificity of the alpha subunit active site (By similarity).</text>
</comment>
<comment type="subcellular location">
    <subcellularLocation>
        <location evidence="3">Lysosome</location>
    </subcellularLocation>
    <subcellularLocation>
        <location evidence="4">Cytoplasmic vesicle</location>
        <location evidence="4">Secretory vesicle</location>
        <location evidence="4">Cortical granule</location>
    </subcellularLocation>
</comment>
<comment type="similarity">
    <text evidence="6">Belongs to the glycosyl hydrolase 20 family.</text>
</comment>
<comment type="sequence caution" evidence="6">
    <conflict type="frameshift">
        <sequence resource="EMBL-CDS" id="CAA63123"/>
    </conflict>
</comment>
<keyword id="KW-0968">Cytoplasmic vesicle</keyword>
<keyword id="KW-0903">Direct protein sequencing</keyword>
<keyword id="KW-1015">Disulfide bond</keyword>
<keyword id="KW-0325">Glycoprotein</keyword>
<keyword id="KW-0326">Glycosidase</keyword>
<keyword id="KW-0378">Hydrolase</keyword>
<keyword id="KW-0443">Lipid metabolism</keyword>
<keyword id="KW-0458">Lysosome</keyword>
<keyword id="KW-1185">Reference proteome</keyword>
<keyword id="KW-0732">Signal</keyword>